<accession>P26309</accession>
<accession>D6VU31</accession>
<dbReference type="EMBL" id="X59428">
    <property type="protein sequence ID" value="CAA42058.1"/>
    <property type="status" value="ALT_FRAME"/>
    <property type="molecule type" value="Genomic_DNA"/>
</dbReference>
<dbReference type="EMBL" id="Z72638">
    <property type="protein sequence ID" value="CAA96824.1"/>
    <property type="molecule type" value="Genomic_DNA"/>
</dbReference>
<dbReference type="EMBL" id="D16506">
    <property type="protein sequence ID" value="BAA03957.1"/>
    <property type="molecule type" value="Genomic_DNA"/>
</dbReference>
<dbReference type="EMBL" id="BK006941">
    <property type="protein sequence ID" value="DAA07992.1"/>
    <property type="molecule type" value="Genomic_DNA"/>
</dbReference>
<dbReference type="PIR" id="S64126">
    <property type="entry name" value="S64126"/>
</dbReference>
<dbReference type="RefSeq" id="NP_011399.1">
    <property type="nucleotide sequence ID" value="NM_001180981.1"/>
</dbReference>
<dbReference type="SMR" id="P26309"/>
<dbReference type="BioGRID" id="33135">
    <property type="interactions" value="1010"/>
</dbReference>
<dbReference type="ComplexPortal" id="CPX-760">
    <property type="entry name" value="Anaphase-Promoting Complex, CDC20 variant"/>
</dbReference>
<dbReference type="ComplexPortal" id="CPX-962">
    <property type="entry name" value="Mitotic checkpoint complex, CDC20-MAD2 subcomplex"/>
</dbReference>
<dbReference type="ComplexPortal" id="CPX-963">
    <property type="entry name" value="Mitotic checkpoint complex, MAD2-MAD3-BUB3-CDC20"/>
</dbReference>
<dbReference type="DIP" id="DIP-982N"/>
<dbReference type="ELM" id="P26309"/>
<dbReference type="FunCoup" id="P26309">
    <property type="interactions" value="302"/>
</dbReference>
<dbReference type="IntAct" id="P26309">
    <property type="interactions" value="23"/>
</dbReference>
<dbReference type="MINT" id="P26309"/>
<dbReference type="STRING" id="4932.YGL116W"/>
<dbReference type="iPTMnet" id="P26309"/>
<dbReference type="PaxDb" id="4932-YGL116W"/>
<dbReference type="PeptideAtlas" id="P26309"/>
<dbReference type="EnsemblFungi" id="YGL116W_mRNA">
    <property type="protein sequence ID" value="YGL116W"/>
    <property type="gene ID" value="YGL116W"/>
</dbReference>
<dbReference type="GeneID" id="852762"/>
<dbReference type="KEGG" id="sce:YGL116W"/>
<dbReference type="AGR" id="SGD:S000003084"/>
<dbReference type="SGD" id="S000003084">
    <property type="gene designation" value="CDC20"/>
</dbReference>
<dbReference type="VEuPathDB" id="FungiDB:YGL116W"/>
<dbReference type="eggNOG" id="KOG0305">
    <property type="taxonomic scope" value="Eukaryota"/>
</dbReference>
<dbReference type="GeneTree" id="ENSGT00950000183104"/>
<dbReference type="HOGENOM" id="CLU_014831_6_0_1"/>
<dbReference type="InParanoid" id="P26309"/>
<dbReference type="OMA" id="TWSDDDC"/>
<dbReference type="OrthoDB" id="10263272at2759"/>
<dbReference type="BioCyc" id="YEAST:G3O-30614-MONOMER"/>
<dbReference type="Reactome" id="R-SCE-141405">
    <property type="pathway name" value="Inhibition of the proteolytic activity of APC/C required for the onset of anaphase by mitotic spindle checkpoint components"/>
</dbReference>
<dbReference type="Reactome" id="R-SCE-141430">
    <property type="pathway name" value="Inactivation of APC/C via direct inhibition of the APC/C complex"/>
</dbReference>
<dbReference type="Reactome" id="R-SCE-983168">
    <property type="pathway name" value="Antigen processing: Ubiquitination &amp; Proteasome degradation"/>
</dbReference>
<dbReference type="BioGRID-ORCS" id="852762">
    <property type="hits" value="1 hit in 10 CRISPR screens"/>
</dbReference>
<dbReference type="PRO" id="PR:P26309"/>
<dbReference type="Proteomes" id="UP000002311">
    <property type="component" value="Chromosome VII"/>
</dbReference>
<dbReference type="RNAct" id="P26309">
    <property type="molecule type" value="protein"/>
</dbReference>
<dbReference type="GO" id="GO:0005680">
    <property type="term" value="C:anaphase-promoting complex"/>
    <property type="evidence" value="ECO:0000353"/>
    <property type="project" value="SGD"/>
</dbReference>
<dbReference type="GO" id="GO:0005737">
    <property type="term" value="C:cytoplasm"/>
    <property type="evidence" value="ECO:0007005"/>
    <property type="project" value="SGD"/>
</dbReference>
<dbReference type="GO" id="GO:0033597">
    <property type="term" value="C:mitotic checkpoint complex"/>
    <property type="evidence" value="ECO:0000314"/>
    <property type="project" value="SGD"/>
</dbReference>
<dbReference type="GO" id="GO:1990333">
    <property type="term" value="C:mitotic checkpoint complex, CDC20-MAD2 subcomplex"/>
    <property type="evidence" value="ECO:0000353"/>
    <property type="project" value="ComplexPortal"/>
</dbReference>
<dbReference type="GO" id="GO:0034399">
    <property type="term" value="C:nuclear periphery"/>
    <property type="evidence" value="ECO:0000314"/>
    <property type="project" value="SGD"/>
</dbReference>
<dbReference type="GO" id="GO:0005634">
    <property type="term" value="C:nucleus"/>
    <property type="evidence" value="ECO:0007005"/>
    <property type="project" value="SGD"/>
</dbReference>
<dbReference type="GO" id="GO:0010997">
    <property type="term" value="F:anaphase-promoting complex binding"/>
    <property type="evidence" value="ECO:0000314"/>
    <property type="project" value="SGD"/>
</dbReference>
<dbReference type="GO" id="GO:1990757">
    <property type="term" value="F:ubiquitin ligase activator activity"/>
    <property type="evidence" value="ECO:0000314"/>
    <property type="project" value="SGD"/>
</dbReference>
<dbReference type="GO" id="GO:0031145">
    <property type="term" value="P:anaphase-promoting complex-dependent catabolic process"/>
    <property type="evidence" value="ECO:0000315"/>
    <property type="project" value="SGD"/>
</dbReference>
<dbReference type="GO" id="GO:0051301">
    <property type="term" value="P:cell division"/>
    <property type="evidence" value="ECO:0007669"/>
    <property type="project" value="UniProtKB-KW"/>
</dbReference>
<dbReference type="GO" id="GO:0051321">
    <property type="term" value="P:meiotic cell cycle"/>
    <property type="evidence" value="ECO:0000314"/>
    <property type="project" value="SGD"/>
</dbReference>
<dbReference type="GO" id="GO:0007094">
    <property type="term" value="P:mitotic spindle assembly checkpoint signaling"/>
    <property type="evidence" value="ECO:0000353"/>
    <property type="project" value="SGD"/>
</dbReference>
<dbReference type="GO" id="GO:1905786">
    <property type="term" value="P:positive regulation of anaphase-promoting complex-dependent catabolic process"/>
    <property type="evidence" value="ECO:0000315"/>
    <property type="project" value="SGD"/>
</dbReference>
<dbReference type="GO" id="GO:0045842">
    <property type="term" value="P:positive regulation of mitotic metaphase/anaphase transition"/>
    <property type="evidence" value="ECO:0000315"/>
    <property type="project" value="SGD"/>
</dbReference>
<dbReference type="GO" id="GO:0031398">
    <property type="term" value="P:positive regulation of protein ubiquitination"/>
    <property type="evidence" value="ECO:0000315"/>
    <property type="project" value="SGD"/>
</dbReference>
<dbReference type="GO" id="GO:0016567">
    <property type="term" value="P:protein ubiquitination"/>
    <property type="evidence" value="ECO:0000303"/>
    <property type="project" value="ComplexPortal"/>
</dbReference>
<dbReference type="GO" id="GO:0040020">
    <property type="term" value="P:regulation of meiotic nuclear division"/>
    <property type="evidence" value="ECO:0000315"/>
    <property type="project" value="SGD"/>
</dbReference>
<dbReference type="GO" id="GO:0007346">
    <property type="term" value="P:regulation of mitotic cell cycle"/>
    <property type="evidence" value="ECO:0000303"/>
    <property type="project" value="ComplexPortal"/>
</dbReference>
<dbReference type="FunFam" id="2.130.10.10:FF:000098">
    <property type="entry name" value="WD repeat-containing protein slp1"/>
    <property type="match status" value="1"/>
</dbReference>
<dbReference type="Gene3D" id="2.130.10.10">
    <property type="entry name" value="YVTN repeat-like/Quinoprotein amine dehydrogenase"/>
    <property type="match status" value="1"/>
</dbReference>
<dbReference type="InterPro" id="IPR033010">
    <property type="entry name" value="Cdc20/Fizzy"/>
</dbReference>
<dbReference type="InterPro" id="IPR011047">
    <property type="entry name" value="Quinoprotein_ADH-like_sf"/>
</dbReference>
<dbReference type="InterPro" id="IPR015943">
    <property type="entry name" value="WD40/YVTN_repeat-like_dom_sf"/>
</dbReference>
<dbReference type="InterPro" id="IPR056150">
    <property type="entry name" value="WD40_CDC20-Fz"/>
</dbReference>
<dbReference type="InterPro" id="IPR019775">
    <property type="entry name" value="WD40_repeat_CS"/>
</dbReference>
<dbReference type="InterPro" id="IPR001680">
    <property type="entry name" value="WD40_rpt"/>
</dbReference>
<dbReference type="PANTHER" id="PTHR19918">
    <property type="entry name" value="CELL DIVISION CYCLE 20 CDC20 FIZZY -RELATED"/>
    <property type="match status" value="1"/>
</dbReference>
<dbReference type="PANTHER" id="PTHR19918:SF8">
    <property type="entry name" value="FI02843P"/>
    <property type="match status" value="1"/>
</dbReference>
<dbReference type="Pfam" id="PF24807">
    <property type="entry name" value="WD40_CDC20-Fz"/>
    <property type="match status" value="1"/>
</dbReference>
<dbReference type="SMART" id="SM00320">
    <property type="entry name" value="WD40"/>
    <property type="match status" value="6"/>
</dbReference>
<dbReference type="SUPFAM" id="SSF50998">
    <property type="entry name" value="Quinoprotein alcohol dehydrogenase-like"/>
    <property type="match status" value="1"/>
</dbReference>
<dbReference type="PROSITE" id="PS00678">
    <property type="entry name" value="WD_REPEATS_1"/>
    <property type="match status" value="4"/>
</dbReference>
<dbReference type="PROSITE" id="PS50082">
    <property type="entry name" value="WD_REPEATS_2"/>
    <property type="match status" value="2"/>
</dbReference>
<dbReference type="PROSITE" id="PS50294">
    <property type="entry name" value="WD_REPEATS_REGION"/>
    <property type="match status" value="1"/>
</dbReference>
<comment type="function">
    <text evidence="7 11 12">Activator protein that regulates the ubiquitin ligase activity and substrate specificity of the anaphase promoting complex/cyclosome (APC/C). At the metaphase-to-anaphase transition, recognizes and binds proteins containing a D-box including the B-type cyclins CLB2 and CLB5, HSL1 and securin PDS1, and recruits them in a C-box-dependent manner to the APC/C for ubiquitination and subsequent proteolysis. Required for sister chromatid separation and disassembly of the mitotic spindle. Target of the spindle checkpoint pathway through participation in the mitotic checkpoint complex (MCC) and the MAD2-CDC20 subcomplex. MCC and presumably the MAD2-CDC20 subcomplex inhibit the ubiquitin ligase activity of the anaphase promoting complex/cyclosome (APC/C) by preventing its activation by CDC20 until proper attachment of all chromosomes to the spindle.</text>
</comment>
<comment type="subunit">
    <text evidence="3 4 5 6 12 13">Component of the mitotic checkpoint complex (MCC) which consists of MAD2, MAD3, BUB3 and CDC20, and of the MAD2-CDC20 subcomplex, both of which appear to be assembled during mitoisis independently of the kinetochore. In mitose-arrested cells, MAD2-CDC20 occurs in a larger amount than MCC. MCC associates with the with the APC/C complex. Interacts with MAD2, MAD3, BUB3, HSL1 and PDS1.</text>
</comment>
<comment type="interaction">
    <interactant intactId="EBI-4212">
        <id>P26309</id>
    </interactant>
    <interactant intactId="EBI-3816">
        <id>P41695</id>
        <label>BUB1</label>
    </interactant>
    <organismsDiffer>false</organismsDiffer>
    <experiments>2</experiments>
</comment>
<comment type="interaction">
    <interactant intactId="EBI-4212">
        <id>P26309</id>
    </interactant>
    <interactant intactId="EBI-3830">
        <id>P26449</id>
        <label>BUB3</label>
    </interactant>
    <organismsDiffer>false</organismsDiffer>
    <experiments>8</experiments>
</comment>
<comment type="interaction">
    <interactant intactId="EBI-4212">
        <id>P26309</id>
    </interactant>
    <interactant intactId="EBI-10362">
        <id>P40958</id>
        <label>MAD2</label>
    </interactant>
    <organismsDiffer>false</organismsDiffer>
    <experiments>6</experiments>
</comment>
<comment type="interaction">
    <interactant intactId="EBI-4212">
        <id>P26309</id>
    </interactant>
    <interactant intactId="EBI-10369">
        <id>P47074</id>
        <label>MAD3</label>
    </interactant>
    <organismsDiffer>false</organismsDiffer>
    <experiments>9</experiments>
</comment>
<comment type="subcellular location">
    <subcellularLocation>
        <location evidence="8 9">Nucleus</location>
    </subcellularLocation>
</comment>
<comment type="developmental stage">
    <text evidence="14">Expressed in late S and M phase of the cell cycle. Degraded in G1 by the APC/C in its CDH1-bound form.</text>
</comment>
<comment type="domain">
    <text>The KEN box is required for the association with the APC/C complex.</text>
</comment>
<comment type="domain">
    <text>The C-box is required for the association with the APC/C complex.</text>
</comment>
<comment type="domain">
    <text>The N-terminal destruction box (D-box) acts as a recognition signal for degradation via the ubiquitin-proteasome pathway.</text>
</comment>
<comment type="PTM">
    <text>Ubiquitinated by the APC/C complex.</text>
</comment>
<comment type="PTM">
    <text evidence="10">Phosphorylated by CDC28.</text>
</comment>
<comment type="similarity">
    <text evidence="15">Belongs to the WD repeat CDC20/Fizzy family.</text>
</comment>
<comment type="sequence caution" evidence="15">
    <conflict type="frameshift">
        <sequence resource="EMBL-CDS" id="CAA42058"/>
    </conflict>
</comment>
<name>CDC20_YEAST</name>
<proteinExistence type="evidence at protein level"/>
<feature type="chain" id="PRO_0000050903" description="APC/C activator protein CDC20">
    <location>
        <begin position="1"/>
        <end position="610"/>
    </location>
</feature>
<feature type="repeat" description="WD 1">
    <location>
        <begin position="257"/>
        <end position="296"/>
    </location>
</feature>
<feature type="repeat" description="WD 2">
    <location>
        <begin position="299"/>
        <end position="338"/>
    </location>
</feature>
<feature type="repeat" description="WD 3">
    <location>
        <begin position="342"/>
        <end position="379"/>
    </location>
</feature>
<feature type="repeat" description="WD 4">
    <location>
        <begin position="383"/>
        <end position="422"/>
    </location>
</feature>
<feature type="repeat" description="WD 5">
    <location>
        <begin position="425"/>
        <end position="467"/>
    </location>
</feature>
<feature type="repeat" description="WD 6">
    <location>
        <begin position="469"/>
        <end position="519"/>
    </location>
</feature>
<feature type="repeat" description="WD 7">
    <location>
        <begin position="523"/>
        <end position="562"/>
    </location>
</feature>
<feature type="region of interest" description="Disordered" evidence="2">
    <location>
        <begin position="38"/>
        <end position="59"/>
    </location>
</feature>
<feature type="region of interest" description="Disordered" evidence="2">
    <location>
        <begin position="579"/>
        <end position="610"/>
    </location>
</feature>
<feature type="short sequence motif" description="D-box">
    <location>
        <begin position="17"/>
        <end position="25"/>
    </location>
</feature>
<feature type="short sequence motif" description="Bipartite nuclear localization signal">
    <location>
        <begin position="85"/>
        <end position="101"/>
    </location>
</feature>
<feature type="short sequence motif" description="C-box">
    <location>
        <begin position="144"/>
        <end position="150"/>
    </location>
</feature>
<feature type="short sequence motif" description="KEN box" evidence="1">
    <location>
        <begin position="586"/>
        <end position="592"/>
    </location>
</feature>
<feature type="compositionally biased region" description="Low complexity" evidence="2">
    <location>
        <begin position="43"/>
        <end position="56"/>
    </location>
</feature>
<feature type="compositionally biased region" description="Basic and acidic residues" evidence="2">
    <location>
        <begin position="579"/>
        <end position="598"/>
    </location>
</feature>
<feature type="compositionally biased region" description="Polar residues" evidence="2">
    <location>
        <begin position="599"/>
        <end position="610"/>
    </location>
</feature>
<feature type="mutagenesis site" description="Confers spindle checkpoint resistance and diminishes binding to MAD2 and MAD3." evidence="13">
    <original>Y</original>
    <variation>N</variation>
    <location>
        <position position="205"/>
    </location>
</feature>
<feature type="mutagenesis site" description="Confers spindle checkpoint resistance and diminishes binding to MAD2 and MAD3." evidence="13">
    <original>P</original>
    <variation>Q</variation>
    <location>
        <position position="209"/>
    </location>
</feature>
<feature type="mutagenesis site" description="Confers spindle checkpoint resistance and diminishes binding to MAD2 and MAD3." evidence="13">
    <original>P</original>
    <variation>L</variation>
    <variation>S</variation>
    <location>
        <position position="210"/>
    </location>
</feature>
<feature type="sequence conflict" description="In Ref. 1; CAA42058." evidence="15" ref="1">
    <original>IG</original>
    <variation>MA</variation>
    <location>
        <begin position="318"/>
        <end position="319"/>
    </location>
</feature>
<keyword id="KW-0131">Cell cycle</keyword>
<keyword id="KW-0132">Cell division</keyword>
<keyword id="KW-0498">Mitosis</keyword>
<keyword id="KW-0539">Nucleus</keyword>
<keyword id="KW-0597">Phosphoprotein</keyword>
<keyword id="KW-1185">Reference proteome</keyword>
<keyword id="KW-0677">Repeat</keyword>
<keyword id="KW-0832">Ubl conjugation</keyword>
<keyword id="KW-0853">WD repeat</keyword>
<reference key="1">
    <citation type="journal article" date="1991" name="Mol. Cell. Biol.">
        <title>The CDC20 gene product of Saccharomyces cerevisiae, a beta-transducin homolog, is required for a subset of microtubule-dependent cellular processes.</title>
        <authorList>
            <person name="Sethi N."/>
            <person name="Monteagudo M.C."/>
            <person name="Koshland D."/>
            <person name="Hogan E."/>
            <person name="Burke D.J."/>
        </authorList>
    </citation>
    <scope>NUCLEOTIDE SEQUENCE [GENOMIC DNA]</scope>
    <source>
        <strain>ATCC 204626 / S288c / A364A</strain>
    </source>
</reference>
<reference key="2">
    <citation type="journal article" date="1997" name="Nature">
        <title>The nucleotide sequence of Saccharomyces cerevisiae chromosome VII.</title>
        <authorList>
            <person name="Tettelin H."/>
            <person name="Agostoni-Carbone M.L."/>
            <person name="Albermann K."/>
            <person name="Albers M."/>
            <person name="Arroyo J."/>
            <person name="Backes U."/>
            <person name="Barreiros T."/>
            <person name="Bertani I."/>
            <person name="Bjourson A.J."/>
            <person name="Brueckner M."/>
            <person name="Bruschi C.V."/>
            <person name="Carignani G."/>
            <person name="Castagnoli L."/>
            <person name="Cerdan E."/>
            <person name="Clemente M.L."/>
            <person name="Coblenz A."/>
            <person name="Coglievina M."/>
            <person name="Coissac E."/>
            <person name="Defoor E."/>
            <person name="Del Bino S."/>
            <person name="Delius H."/>
            <person name="Delneri D."/>
            <person name="de Wergifosse P."/>
            <person name="Dujon B."/>
            <person name="Durand P."/>
            <person name="Entian K.-D."/>
            <person name="Eraso P."/>
            <person name="Escribano V."/>
            <person name="Fabiani L."/>
            <person name="Fartmann B."/>
            <person name="Feroli F."/>
            <person name="Feuermann M."/>
            <person name="Frontali L."/>
            <person name="Garcia-Gonzalez M."/>
            <person name="Garcia-Saez M.I."/>
            <person name="Goffeau A."/>
            <person name="Guerreiro P."/>
            <person name="Hani J."/>
            <person name="Hansen M."/>
            <person name="Hebling U."/>
            <person name="Hernandez K."/>
            <person name="Heumann K."/>
            <person name="Hilger F."/>
            <person name="Hofmann B."/>
            <person name="Indge K.J."/>
            <person name="James C.M."/>
            <person name="Klima R."/>
            <person name="Koetter P."/>
            <person name="Kramer B."/>
            <person name="Kramer W."/>
            <person name="Lauquin G."/>
            <person name="Leuther H."/>
            <person name="Louis E.J."/>
            <person name="Maillier E."/>
            <person name="Marconi A."/>
            <person name="Martegani E."/>
            <person name="Mazon M.J."/>
            <person name="Mazzoni C."/>
            <person name="McReynolds A.D.K."/>
            <person name="Melchioretto P."/>
            <person name="Mewes H.-W."/>
            <person name="Minenkova O."/>
            <person name="Mueller-Auer S."/>
            <person name="Nawrocki A."/>
            <person name="Netter P."/>
            <person name="Neu R."/>
            <person name="Nombela C."/>
            <person name="Oliver S.G."/>
            <person name="Panzeri L."/>
            <person name="Paoluzi S."/>
            <person name="Plevani P."/>
            <person name="Portetelle D."/>
            <person name="Portillo F."/>
            <person name="Potier S."/>
            <person name="Purnelle B."/>
            <person name="Rieger M."/>
            <person name="Riles L."/>
            <person name="Rinaldi T."/>
            <person name="Robben J."/>
            <person name="Rodrigues-Pousada C."/>
            <person name="Rodriguez-Belmonte E."/>
            <person name="Rodriguez-Torres A.M."/>
            <person name="Rose M."/>
            <person name="Ruzzi M."/>
            <person name="Saliola M."/>
            <person name="Sanchez-Perez M."/>
            <person name="Schaefer B."/>
            <person name="Schaefer M."/>
            <person name="Scharfe M."/>
            <person name="Schmidheini T."/>
            <person name="Schreer A."/>
            <person name="Skala J."/>
            <person name="Souciet J.-L."/>
            <person name="Steensma H.Y."/>
            <person name="Talla E."/>
            <person name="Thierry A."/>
            <person name="Vandenbol M."/>
            <person name="van der Aart Q.J.M."/>
            <person name="Van Dyck L."/>
            <person name="Vanoni M."/>
            <person name="Verhasselt P."/>
            <person name="Voet M."/>
            <person name="Volckaert G."/>
            <person name="Wambutt R."/>
            <person name="Watson M.D."/>
            <person name="Weber N."/>
            <person name="Wedler E."/>
            <person name="Wedler H."/>
            <person name="Wipfli P."/>
            <person name="Wolf K."/>
            <person name="Wright L.F."/>
            <person name="Zaccaria P."/>
            <person name="Zimmermann M."/>
            <person name="Zollner A."/>
            <person name="Kleine K."/>
        </authorList>
    </citation>
    <scope>NUCLEOTIDE SEQUENCE [LARGE SCALE GENOMIC DNA]</scope>
    <source>
        <strain>ATCC 204508 / S288c</strain>
    </source>
</reference>
<reference key="3">
    <citation type="journal article" date="2014" name="G3 (Bethesda)">
        <title>The reference genome sequence of Saccharomyces cerevisiae: Then and now.</title>
        <authorList>
            <person name="Engel S.R."/>
            <person name="Dietrich F.S."/>
            <person name="Fisk D.G."/>
            <person name="Binkley G."/>
            <person name="Balakrishnan R."/>
            <person name="Costanzo M.C."/>
            <person name="Dwight S.S."/>
            <person name="Hitz B.C."/>
            <person name="Karra K."/>
            <person name="Nash R.S."/>
            <person name="Weng S."/>
            <person name="Wong E.D."/>
            <person name="Lloyd P."/>
            <person name="Skrzypek M.S."/>
            <person name="Miyasato S.R."/>
            <person name="Simison M."/>
            <person name="Cherry J.M."/>
        </authorList>
    </citation>
    <scope>GENOME REANNOTATION</scope>
    <source>
        <strain>ATCC 204508 / S288c</strain>
    </source>
</reference>
<reference key="4">
    <citation type="submission" date="1993-06" db="EMBL/GenBank/DDBJ databases">
        <title>Correct end of the ORF for the CDC20 gene of Saccharomyces cerevisiae.</title>
        <authorList>
            <person name="Doi A."/>
            <person name="Doi K."/>
        </authorList>
    </citation>
    <scope>NUCLEOTIDE SEQUENCE [GENOMIC DNA] OF 50-610</scope>
</reference>
<reference key="5">
    <citation type="journal article" date="1998" name="Curr. Biol.">
        <title>Cdc20 is essential for the cyclosome-mediated proteolysis of both Pds1 and Clb2 during M phase in budding yeast.</title>
        <authorList>
            <person name="Lim H.H."/>
            <person name="Goh P.-Y."/>
            <person name="Surana U."/>
        </authorList>
    </citation>
    <scope>ASSOCIATION WITH THE APC/C COMPLEX</scope>
</reference>
<reference key="6">
    <citation type="journal article" date="1998" name="Curr. Biol.">
        <title>The regulation of Cdc20 proteolysis reveals a role for APC components Cdc23 and Cdc27 during S phase and early mitosis.</title>
        <authorList>
            <person name="Prinz S."/>
            <person name="Hwang E.S."/>
            <person name="Visintin R."/>
            <person name="Amon A."/>
        </authorList>
    </citation>
    <scope>DEVELOPMENTAL STAGE</scope>
    <scope>DOMAIN D-BOX MOTIF</scope>
</reference>
<reference key="7">
    <citation type="journal article" date="1998" name="Science">
        <title>Budding yeast Cdc20: a target of the spindle checkpoint.</title>
        <authorList>
            <person name="Hwang L.H."/>
            <person name="Lau L.F."/>
            <person name="Smith D.L."/>
            <person name="Mistrot C.A."/>
            <person name="Hardwick K.G."/>
            <person name="Hwang E.S."/>
            <person name="Amon A."/>
            <person name="Murray A.W."/>
        </authorList>
    </citation>
    <scope>INTERACTION WITH MAD2 AND MAD3</scope>
    <scope>MUTAGENESIS OF TYR-205; PRO-209 AND PRO-210</scope>
</reference>
<reference key="8">
    <citation type="journal article" date="2000" name="J. Cell Biol.">
        <title>MAD3 encodes a novel component of the spindle checkpoint which interacts with Bub3p, Cdc20p, and Mad2p.</title>
        <authorList>
            <person name="Hardwick K.G."/>
            <person name="Johnston R.C."/>
            <person name="Smith D.L."/>
            <person name="Murray A.W."/>
        </authorList>
    </citation>
    <scope>INTERACTION WITH MAD3</scope>
</reference>
<reference key="9">
    <citation type="journal article" date="2001" name="Curr. Biol.">
        <title>The anaphase inhibitor Pds1 binds to the APC/C-associated protein Cdc20 in a destruction box-dependent manner.</title>
        <authorList>
            <person name="Hilioti Z."/>
            <person name="Chung Y.-S."/>
            <person name="Mochizuki Y."/>
            <person name="Hardy C.F.J."/>
            <person name="Cohen-Fix O."/>
        </authorList>
    </citation>
    <scope>INTERACTION WITH PDS1</scope>
</reference>
<reference key="10">
    <citation type="journal article" date="2001" name="EMBO J.">
        <title>Yeast Hct1 recognizes the mitotic cyclin Clb2 and other substrates of the ubiquitin ligase APC.</title>
        <authorList>
            <person name="Schwab M."/>
            <person name="Neutzner M."/>
            <person name="Moecker D."/>
            <person name="Seufert W."/>
        </authorList>
    </citation>
    <scope>INTERACTION WITH PDS1</scope>
    <scope>DOMAIN C-BOX MOTIF</scope>
</reference>
<reference key="11">
    <citation type="journal article" date="2001" name="Genes Dev.">
        <title>D box and KEN box motifs in budding yeast Hsl1p are required for APC-mediated degradation and direct binding to Cdc20p and Cdh1p.</title>
        <authorList>
            <person name="Burton J.L."/>
            <person name="Solomon M.J."/>
        </authorList>
    </citation>
    <scope>INTERACTION WITH HSL1</scope>
</reference>
<reference key="12">
    <citation type="journal article" date="2002" name="EMBO J.">
        <title>Cell cycle-dependent nuclear export of Cdh1p may contribute to the inactivation of APC/C(Cdh1).</title>
        <authorList>
            <person name="Jaquenoud M."/>
            <person name="van Drogen F."/>
            <person name="Peter M."/>
        </authorList>
    </citation>
    <scope>SUBCELLULAR LOCATION</scope>
</reference>
<reference key="13">
    <citation type="journal article" date="2002" name="Nature">
        <title>APC-dependent proteolysis of the mitotic cyclin Clb2 is essential for mitotic exit.</title>
        <authorList>
            <person name="Waesch R."/>
            <person name="Cross F.R."/>
        </authorList>
    </citation>
    <scope>FUNCTION IN CLB2 AND CLB5 DEGRADATION</scope>
</reference>
<reference key="14">
    <citation type="journal article" date="2003" name="Nature">
        <title>Global analysis of protein localization in budding yeast.</title>
        <authorList>
            <person name="Huh W.-K."/>
            <person name="Falvo J.V."/>
            <person name="Gerke L.C."/>
            <person name="Carroll A.S."/>
            <person name="Howson R.W."/>
            <person name="Weissman J.S."/>
            <person name="O'Shea E.K."/>
        </authorList>
    </citation>
    <scope>SUBCELLULAR LOCATION [LARGE SCALE ANALYSIS]</scope>
</reference>
<reference key="15">
    <citation type="journal article" date="2003" name="Nature">
        <title>Targets of the cyclin-dependent kinase Cdk1.</title>
        <authorList>
            <person name="Ubersax J.A."/>
            <person name="Woodbury E.L."/>
            <person name="Quang P.N."/>
            <person name="Paraz M."/>
            <person name="Blethrow J.D."/>
            <person name="Shah K."/>
            <person name="Shokat K.M."/>
            <person name="Morgan D.O."/>
        </authorList>
    </citation>
    <scope>PHOSPHORYLATION BY CDC28</scope>
</reference>
<reference key="16">
    <citation type="journal article" date="2004" name="Genes Dev.">
        <title>Spindle checkpoint regulates Cdc20p stability in Saccharomyces cerevisiae.</title>
        <authorList>
            <person name="Pan J."/>
            <person name="Chen R.-H."/>
        </authorList>
    </citation>
    <scope>FUNCTION AS SPINDLE CHECKPOINT TARGET</scope>
</reference>
<reference key="17">
    <citation type="journal article" date="2005" name="Eukaryot. Cell">
        <title>Two complexes of spindle checkpoint proteins containing Cdc20 and Mad2 assemble during mitosis independently of the kinetochore in Saccharomyces cerevisiae.</title>
        <authorList>
            <person name="Poddar A."/>
            <person name="Stukenberg P.T."/>
            <person name="Burke D.J."/>
        </authorList>
    </citation>
    <scope>IDENTIFICATION IN THE MCC COMPLEX</scope>
    <scope>IDENTIFICATION IN THE MAD2-CDC20 COMPLEX</scope>
    <scope>FUNCTION OF THE MCC COMPLEX</scope>
</reference>
<gene>
    <name type="primary">CDC20</name>
    <name type="ordered locus">YGL116W</name>
</gene>
<organism>
    <name type="scientific">Saccharomyces cerevisiae (strain ATCC 204508 / S288c)</name>
    <name type="common">Baker's yeast</name>
    <dbReference type="NCBI Taxonomy" id="559292"/>
    <lineage>
        <taxon>Eukaryota</taxon>
        <taxon>Fungi</taxon>
        <taxon>Dikarya</taxon>
        <taxon>Ascomycota</taxon>
        <taxon>Saccharomycotina</taxon>
        <taxon>Saccharomycetes</taxon>
        <taxon>Saccharomycetales</taxon>
        <taxon>Saccharomycetaceae</taxon>
        <taxon>Saccharomyces</taxon>
    </lineage>
</organism>
<sequence>MPESSRDKGNAAISGNRSVLSIASPTKLNILSSDWSRNQGKVSKNSLKRSSSLNIRNSKRPSLQASANSIYSRPKITIGAPPLIRRDSSFFKDEFDAKKDKATFSAYSSRSYPTIGSESVVSQTSLSQPTTSREVDEQFTVAADRYIPILQGASQNKVDPETLHEALPPPNASPISHLRAQTKIVFKQNVAEACGLDMNKRILQYMPEPPKCSSLRQKSYIMKKRTHYSYQQEQKIPDLIKLRKINTNPERILDAPGFQDDFYLNLLSWSKKNVLAIALDTALYLWNATTGDVSLLTDFENTTICSVTWSDDDCHISIGKEDGNTEIWDVETMSLIRTMRSGLGVRIGSLSWLDTLIATGSRSGEIQINDVRIKQHIVSTWAEHTGEVCGLSYKSDGLQLASGGNDNTVMIWDTRTSLPQFSKKTHTAAVKALSWCPYSPNILASGGGQTDKHIHFWNSITGARVGSINTGSQVSSLHWGQSHTSTNGGMMNKEIVATGGNPENAISVYNYETKFKVAEVVHAHEARICCSQLSPDGTTLATVGGDENLKFYKIFDPRCTGRSREDGLMDGMLGLIGKEGCRTNDKENRSKNSSEIHTRRPSSTSQYLIR</sequence>
<evidence type="ECO:0000255" key="1"/>
<evidence type="ECO:0000256" key="2">
    <source>
        <dbReference type="SAM" id="MobiDB-lite"/>
    </source>
</evidence>
<evidence type="ECO:0000269" key="3">
    <source>
    </source>
</evidence>
<evidence type="ECO:0000269" key="4">
    <source>
    </source>
</evidence>
<evidence type="ECO:0000269" key="5">
    <source>
    </source>
</evidence>
<evidence type="ECO:0000269" key="6">
    <source>
    </source>
</evidence>
<evidence type="ECO:0000269" key="7">
    <source>
    </source>
</evidence>
<evidence type="ECO:0000269" key="8">
    <source>
    </source>
</evidence>
<evidence type="ECO:0000269" key="9">
    <source>
    </source>
</evidence>
<evidence type="ECO:0000269" key="10">
    <source>
    </source>
</evidence>
<evidence type="ECO:0000269" key="11">
    <source>
    </source>
</evidence>
<evidence type="ECO:0000269" key="12">
    <source>
    </source>
</evidence>
<evidence type="ECO:0000269" key="13">
    <source>
    </source>
</evidence>
<evidence type="ECO:0000269" key="14">
    <source>
    </source>
</evidence>
<evidence type="ECO:0000305" key="15"/>
<protein>
    <recommendedName>
        <fullName>APC/C activator protein CDC20</fullName>
    </recommendedName>
    <alternativeName>
        <fullName>Cell division control protein 20</fullName>
    </alternativeName>
</protein>